<dbReference type="EC" id="3.2.-.-" evidence="1"/>
<dbReference type="EMBL" id="CP000653">
    <property type="protein sequence ID" value="ABP59859.1"/>
    <property type="molecule type" value="Genomic_DNA"/>
</dbReference>
<dbReference type="RefSeq" id="WP_012016578.1">
    <property type="nucleotide sequence ID" value="NC_009436.1"/>
</dbReference>
<dbReference type="SMR" id="A4W829"/>
<dbReference type="STRING" id="399742.Ent638_1178"/>
<dbReference type="KEGG" id="ent:Ent638_1178"/>
<dbReference type="eggNOG" id="COG1957">
    <property type="taxonomic scope" value="Bacteria"/>
</dbReference>
<dbReference type="HOGENOM" id="CLU_036838_2_0_6"/>
<dbReference type="OrthoDB" id="9797882at2"/>
<dbReference type="Proteomes" id="UP000000230">
    <property type="component" value="Chromosome"/>
</dbReference>
<dbReference type="GO" id="GO:0005829">
    <property type="term" value="C:cytosol"/>
    <property type="evidence" value="ECO:0007669"/>
    <property type="project" value="TreeGrafter"/>
</dbReference>
<dbReference type="GO" id="GO:0008477">
    <property type="term" value="F:purine nucleosidase activity"/>
    <property type="evidence" value="ECO:0007669"/>
    <property type="project" value="TreeGrafter"/>
</dbReference>
<dbReference type="GO" id="GO:0045437">
    <property type="term" value="F:uridine nucleosidase activity"/>
    <property type="evidence" value="ECO:0007669"/>
    <property type="project" value="InterPro"/>
</dbReference>
<dbReference type="GO" id="GO:0015949">
    <property type="term" value="P:nucleobase-containing small molecule interconversion"/>
    <property type="evidence" value="ECO:0007669"/>
    <property type="project" value="InterPro"/>
</dbReference>
<dbReference type="GO" id="GO:0006152">
    <property type="term" value="P:purine nucleoside catabolic process"/>
    <property type="evidence" value="ECO:0007669"/>
    <property type="project" value="TreeGrafter"/>
</dbReference>
<dbReference type="GO" id="GO:0006206">
    <property type="term" value="P:pyrimidine nucleobase metabolic process"/>
    <property type="evidence" value="ECO:0007669"/>
    <property type="project" value="UniProtKB-UniRule"/>
</dbReference>
<dbReference type="CDD" id="cd02651">
    <property type="entry name" value="nuc_hydro_IU_UC_XIUA"/>
    <property type="match status" value="1"/>
</dbReference>
<dbReference type="FunFam" id="3.90.245.10:FF:000001">
    <property type="entry name" value="Pyrimidine-specific ribonucleoside hydrolase RihA"/>
    <property type="match status" value="1"/>
</dbReference>
<dbReference type="Gene3D" id="3.90.245.10">
    <property type="entry name" value="Ribonucleoside hydrolase-like"/>
    <property type="match status" value="1"/>
</dbReference>
<dbReference type="HAMAP" id="MF_01431">
    <property type="entry name" value="Pyrim_hydro_RihA"/>
    <property type="match status" value="1"/>
</dbReference>
<dbReference type="InterPro" id="IPR015910">
    <property type="entry name" value="I/U_nuclsd_hydro_CS"/>
</dbReference>
<dbReference type="InterPro" id="IPR001910">
    <property type="entry name" value="Inosine/uridine_hydrolase_dom"/>
</dbReference>
<dbReference type="InterPro" id="IPR023186">
    <property type="entry name" value="IUNH"/>
</dbReference>
<dbReference type="InterPro" id="IPR022975">
    <property type="entry name" value="Pyrim_hydro_RihA"/>
</dbReference>
<dbReference type="InterPro" id="IPR036452">
    <property type="entry name" value="Ribo_hydro-like"/>
</dbReference>
<dbReference type="NCBIfam" id="NF007761">
    <property type="entry name" value="PRK10443.1"/>
    <property type="match status" value="1"/>
</dbReference>
<dbReference type="PANTHER" id="PTHR12304">
    <property type="entry name" value="INOSINE-URIDINE PREFERRING NUCLEOSIDE HYDROLASE"/>
    <property type="match status" value="1"/>
</dbReference>
<dbReference type="PANTHER" id="PTHR12304:SF4">
    <property type="entry name" value="URIDINE NUCLEOSIDASE"/>
    <property type="match status" value="1"/>
</dbReference>
<dbReference type="Pfam" id="PF01156">
    <property type="entry name" value="IU_nuc_hydro"/>
    <property type="match status" value="1"/>
</dbReference>
<dbReference type="SUPFAM" id="SSF53590">
    <property type="entry name" value="Nucleoside hydrolase"/>
    <property type="match status" value="1"/>
</dbReference>
<dbReference type="PROSITE" id="PS01247">
    <property type="entry name" value="IUNH"/>
    <property type="match status" value="1"/>
</dbReference>
<organism>
    <name type="scientific">Enterobacter sp. (strain 638)</name>
    <dbReference type="NCBI Taxonomy" id="399742"/>
    <lineage>
        <taxon>Bacteria</taxon>
        <taxon>Pseudomonadati</taxon>
        <taxon>Pseudomonadota</taxon>
        <taxon>Gammaproteobacteria</taxon>
        <taxon>Enterobacterales</taxon>
        <taxon>Enterobacteriaceae</taxon>
        <taxon>Enterobacter</taxon>
    </lineage>
</organism>
<keyword id="KW-0326">Glycosidase</keyword>
<keyword id="KW-0378">Hydrolase</keyword>
<proteinExistence type="inferred from homology"/>
<accession>A4W829</accession>
<name>RIHA_ENT38</name>
<comment type="function">
    <text evidence="1">Hydrolyzes cytidine or uridine to ribose and cytosine or uracil, respectively.</text>
</comment>
<comment type="similarity">
    <text evidence="1">Belongs to the IUNH family. RihA subfamily.</text>
</comment>
<gene>
    <name evidence="1" type="primary">rihA</name>
    <name type="ordered locus">Ent638_1178</name>
</gene>
<protein>
    <recommendedName>
        <fullName evidence="1">Pyrimidine-specific ribonucleoside hydrolase RihA</fullName>
        <ecNumber evidence="1">3.2.-.-</ecNumber>
    </recommendedName>
    <alternativeName>
        <fullName evidence="1">Cytidine/uridine-specific hydrolase</fullName>
    </alternativeName>
</protein>
<reference key="1">
    <citation type="journal article" date="2010" name="PLoS Genet.">
        <title>Genome sequence of the plant growth promoting endophytic bacterium Enterobacter sp. 638.</title>
        <authorList>
            <person name="Taghavi S."/>
            <person name="van der Lelie D."/>
            <person name="Hoffman A."/>
            <person name="Zhang Y.B."/>
            <person name="Walla M.D."/>
            <person name="Vangronsveld J."/>
            <person name="Newman L."/>
            <person name="Monchy S."/>
        </authorList>
    </citation>
    <scope>NUCLEOTIDE SEQUENCE [LARGE SCALE GENOMIC DNA]</scope>
    <source>
        <strain>638</strain>
    </source>
</reference>
<sequence>MALPIILDCDPGHDDAIALVLALASPELALKAVTSSAGNQTPDKTLRNVLRMLTLLNRTDIPVAGGARKPLMRDLIIADNVHGETGLDGPALPEPTFKPQACTAVELMVKVLRESDEPVTLVATGPQTNVALLLNSHPELHRKIARIVIMGGSMGLGNWTPAAEFNIFVDPEAAEIVFQSGLPIVMAGLDVTHRAQIMSADVERFRAIGNPVATTVAELLDFFMEYHKAEKWGFHGAPLHDPCTIAWLLKPELFTTVDRWVGVETQGKYTQGMTVVDYYSLTGNKPNTTLMVDIDRQGFVDLLAERLAQFSIR</sequence>
<evidence type="ECO:0000255" key="1">
    <source>
        <dbReference type="HAMAP-Rule" id="MF_01431"/>
    </source>
</evidence>
<feature type="chain" id="PRO_1000068528" description="Pyrimidine-specific ribonucleoside hydrolase RihA">
    <location>
        <begin position="1"/>
        <end position="313"/>
    </location>
</feature>
<feature type="active site" evidence="1">
    <location>
        <position position="240"/>
    </location>
</feature>